<reference key="1">
    <citation type="journal article" date="2000" name="Nature">
        <title>Complete genome sequence of Pseudomonas aeruginosa PAO1, an opportunistic pathogen.</title>
        <authorList>
            <person name="Stover C.K."/>
            <person name="Pham X.-Q.T."/>
            <person name="Erwin A.L."/>
            <person name="Mizoguchi S.D."/>
            <person name="Warrener P."/>
            <person name="Hickey M.J."/>
            <person name="Brinkman F.S.L."/>
            <person name="Hufnagle W.O."/>
            <person name="Kowalik D.J."/>
            <person name="Lagrou M."/>
            <person name="Garber R.L."/>
            <person name="Goltry L."/>
            <person name="Tolentino E."/>
            <person name="Westbrock-Wadman S."/>
            <person name="Yuan Y."/>
            <person name="Brody L.L."/>
            <person name="Coulter S.N."/>
            <person name="Folger K.R."/>
            <person name="Kas A."/>
            <person name="Larbig K."/>
            <person name="Lim R.M."/>
            <person name="Smith K.A."/>
            <person name="Spencer D.H."/>
            <person name="Wong G.K.-S."/>
            <person name="Wu Z."/>
            <person name="Paulsen I.T."/>
            <person name="Reizer J."/>
            <person name="Saier M.H. Jr."/>
            <person name="Hancock R.E.W."/>
            <person name="Lory S."/>
            <person name="Olson M.V."/>
        </authorList>
    </citation>
    <scope>NUCLEOTIDE SEQUENCE [LARGE SCALE GENOMIC DNA]</scope>
    <source>
        <strain>ATCC 15692 / DSM 22644 / CIP 104116 / JCM 14847 / LMG 12228 / 1C / PRS 101 / PAO1</strain>
    </source>
</reference>
<reference key="2">
    <citation type="journal article" date="2015" name="J. Biol. Chem.">
        <title>The cysteine dioxygenase homologue from Pseudomonas aeruginosa is a 3-mercaptopropionate dioxygenase.</title>
        <authorList>
            <person name="Tchesnokov E.P."/>
            <person name="Fellner M."/>
            <person name="Siakkou E."/>
            <person name="Kleffmann T."/>
            <person name="Martin L.W."/>
            <person name="Aloi S."/>
            <person name="Lamont I.L."/>
            <person name="Wilbanks S.M."/>
            <person name="Jameson G.N."/>
        </authorList>
    </citation>
    <scope>X-RAY CRYSTALLOGRAPHY (2.14 ANGSTROMS) IN COMPLEX WITH IRON</scope>
    <scope>FUNCTION</scope>
    <scope>CATALYTIC ACTIVITY</scope>
    <scope>BIOPHYSICOCHEMICAL PROPERTIES</scope>
    <scope>SUBSTRATE SPECIFICITY</scope>
    <scope>COFACTOR</scope>
    <scope>IDENTIFICATION BY MASS SPECTROMETRY</scope>
    <scope>INDUCTION</scope>
    <scope>SUBUNIT</scope>
    <source>
        <strain>ATCC 15692 / DSM 22644 / CIP 104116 / JCM 14847 / LMG 12228 / 1C / PRS 101 / PAO1</strain>
    </source>
</reference>
<keyword id="KW-0002">3D-structure</keyword>
<keyword id="KW-0223">Dioxygenase</keyword>
<keyword id="KW-0408">Iron</keyword>
<keyword id="KW-0479">Metal-binding</keyword>
<keyword id="KW-0560">Oxidoreductase</keyword>
<keyword id="KW-1185">Reference proteome</keyword>
<proteinExistence type="evidence at protein level"/>
<accession>Q9I0N5</accession>
<gene>
    <name evidence="4" type="ordered locus">PA2602</name>
</gene>
<sequence length="201" mass="22548">MSSILRLDRLRQFIGELATLLDSRPDESTLLAQAHPLLAELVHQDDWLPEDCARPDPQRYQQYLLHVDSRQRFSVVSFVWGPGQITPVHDHRVWGLIGMLRGAEYSQPYAFDAGGRPHPSGARRRLEPGEVEALSPRIGDVHQVSNAFSDRTSISIHVYGANIGAVRRAVFSAEGEEKPFISGYSNSRLPNIWDLSKENPA</sequence>
<evidence type="ECO:0000269" key="1">
    <source>
    </source>
</evidence>
<evidence type="ECO:0000303" key="2">
    <source>
    </source>
</evidence>
<evidence type="ECO:0000305" key="3"/>
<evidence type="ECO:0000312" key="4">
    <source>
        <dbReference type="EMBL" id="AAG05990.1"/>
    </source>
</evidence>
<evidence type="ECO:0007744" key="5">
    <source>
        <dbReference type="PDB" id="3USS"/>
    </source>
</evidence>
<evidence type="ECO:0007829" key="6">
    <source>
        <dbReference type="PDB" id="4TLF"/>
    </source>
</evidence>
<feature type="chain" id="PRO_0000436011" description="3-mercaptopropionate dioxygenase">
    <location>
        <begin position="1"/>
        <end position="201"/>
    </location>
</feature>
<feature type="binding site" evidence="1 5">
    <location>
        <position position="89"/>
    </location>
    <ligand>
        <name>Fe cation</name>
        <dbReference type="ChEBI" id="CHEBI:24875"/>
        <note>catalytic</note>
    </ligand>
</feature>
<feature type="binding site" evidence="1 5">
    <location>
        <position position="91"/>
    </location>
    <ligand>
        <name>Fe cation</name>
        <dbReference type="ChEBI" id="CHEBI:24875"/>
        <note>catalytic</note>
    </ligand>
</feature>
<feature type="binding site" evidence="1 5">
    <location>
        <position position="142"/>
    </location>
    <ligand>
        <name>Fe cation</name>
        <dbReference type="ChEBI" id="CHEBI:24875"/>
        <note>catalytic</note>
    </ligand>
</feature>
<feature type="helix" evidence="6">
    <location>
        <begin position="7"/>
        <end position="22"/>
    </location>
</feature>
<feature type="helix" evidence="6">
    <location>
        <begin position="27"/>
        <end position="43"/>
    </location>
</feature>
<feature type="helix" evidence="6">
    <location>
        <begin position="50"/>
        <end position="53"/>
    </location>
</feature>
<feature type="strand" evidence="6">
    <location>
        <begin position="57"/>
        <end position="59"/>
    </location>
</feature>
<feature type="strand" evidence="6">
    <location>
        <begin position="61"/>
        <end position="67"/>
    </location>
</feature>
<feature type="strand" evidence="6">
    <location>
        <begin position="74"/>
        <end position="80"/>
    </location>
</feature>
<feature type="strand" evidence="6">
    <location>
        <begin position="95"/>
        <end position="102"/>
    </location>
</feature>
<feature type="strand" evidence="6">
    <location>
        <begin position="104"/>
        <end position="111"/>
    </location>
</feature>
<feature type="strand" evidence="6">
    <location>
        <begin position="117"/>
        <end position="119"/>
    </location>
</feature>
<feature type="strand" evidence="6">
    <location>
        <begin position="124"/>
        <end position="126"/>
    </location>
</feature>
<feature type="strand" evidence="6">
    <location>
        <begin position="131"/>
        <end position="135"/>
    </location>
</feature>
<feature type="turn" evidence="6">
    <location>
        <begin position="136"/>
        <end position="138"/>
    </location>
</feature>
<feature type="strand" evidence="6">
    <location>
        <begin position="142"/>
        <end position="147"/>
    </location>
</feature>
<feature type="strand" evidence="6">
    <location>
        <begin position="149"/>
        <end position="151"/>
    </location>
</feature>
<feature type="strand" evidence="6">
    <location>
        <begin position="153"/>
        <end position="161"/>
    </location>
</feature>
<feature type="helix" evidence="6">
    <location>
        <begin position="163"/>
        <end position="165"/>
    </location>
</feature>
<feature type="strand" evidence="6">
    <location>
        <begin position="168"/>
        <end position="171"/>
    </location>
</feature>
<feature type="strand" evidence="6">
    <location>
        <begin position="177"/>
        <end position="180"/>
    </location>
</feature>
<feature type="strand" evidence="6">
    <location>
        <begin position="187"/>
        <end position="190"/>
    </location>
</feature>
<feature type="helix" evidence="6">
    <location>
        <begin position="195"/>
        <end position="197"/>
    </location>
</feature>
<comment type="function">
    <text evidence="1">Thiol dioxygenase that catalyzes the dioxygenation of 3-mercaptopropionate (3-MPA) to 3-sulfinopropionate (3-SPA). To a lesser extent (40-fold lower efficiency), is also able to oxidize cysteine to cysteine sulfinate (CSA). Cannot use N-acetyl-L-cysteine, homocysteine, and cysteamine as substrates. The physiological role of this enzyme is unclear.</text>
</comment>
<comment type="catalytic activity">
    <reaction evidence="1">
        <text>3-sulfanylpropanoate + O2 = 3-sulfinopropanoate + H(+)</text>
        <dbReference type="Rhea" id="RHEA:53776"/>
        <dbReference type="ChEBI" id="CHEBI:15378"/>
        <dbReference type="ChEBI" id="CHEBI:15379"/>
        <dbReference type="ChEBI" id="CHEBI:86386"/>
        <dbReference type="ChEBI" id="CHEBI:137673"/>
        <dbReference type="EC" id="1.13.11.91"/>
    </reaction>
</comment>
<comment type="cofactor">
    <cofactor evidence="1">
        <name>Fe(2+)</name>
        <dbReference type="ChEBI" id="CHEBI:29033"/>
    </cofactor>
    <text evidence="1">Binds 1 Fe(2+) ion per subunit.</text>
</comment>
<comment type="biophysicochemical properties">
    <kinetics>
        <KM evidence="1">1 mM for 3-mercaptopropionate (at 37 degrees Celsius)</KM>
        <KM evidence="1">8 mM for cysteine (at 37 degrees Celsius)</KM>
        <text evidence="1">kcat is 0.11 sec(-1) with 3-mercaptopropionate as substrate. kcat is 0.021 sec(-1) with cysteine as substrate (at 37 degrees Celsius).</text>
    </kinetics>
</comment>
<comment type="subunit">
    <text evidence="1">Forms homodimer in the crystal; however, there is no evidence that the dimer exists under physiological conditions or has biological significance.</text>
</comment>
<comment type="induction">
    <text evidence="1">Is expressed in low levels (at protein level).</text>
</comment>
<comment type="miscellaneous">
    <text evidence="1">Does not contain a cysteine-tyrosine cross-link observed in all mammalian cysteine dioxygenase (CDO) structures.</text>
</comment>
<comment type="similarity">
    <text evidence="3">Belongs to the cysteine dioxygenase family.</text>
</comment>
<organism>
    <name type="scientific">Pseudomonas aeruginosa (strain ATCC 15692 / DSM 22644 / CIP 104116 / JCM 14847 / LMG 12228 / 1C / PRS 101 / PAO1)</name>
    <dbReference type="NCBI Taxonomy" id="208964"/>
    <lineage>
        <taxon>Bacteria</taxon>
        <taxon>Pseudomonadati</taxon>
        <taxon>Pseudomonadota</taxon>
        <taxon>Gammaproteobacteria</taxon>
        <taxon>Pseudomonadales</taxon>
        <taxon>Pseudomonadaceae</taxon>
        <taxon>Pseudomonas</taxon>
    </lineage>
</organism>
<name>3MDO_PSEAE</name>
<dbReference type="EC" id="1.13.11.91" evidence="1"/>
<dbReference type="EMBL" id="AE004091">
    <property type="protein sequence ID" value="AAG05990.1"/>
    <property type="molecule type" value="Genomic_DNA"/>
</dbReference>
<dbReference type="PIR" id="E83319">
    <property type="entry name" value="E83319"/>
</dbReference>
<dbReference type="RefSeq" id="NP_251292.1">
    <property type="nucleotide sequence ID" value="NC_002516.2"/>
</dbReference>
<dbReference type="RefSeq" id="WP_003113364.1">
    <property type="nucleotide sequence ID" value="NZ_QZGE01000008.1"/>
</dbReference>
<dbReference type="PDB" id="3USS">
    <property type="method" value="X-ray"/>
    <property type="resolution" value="2.70 A"/>
    <property type="chains" value="A/B=1-201"/>
</dbReference>
<dbReference type="PDB" id="4TLF">
    <property type="method" value="X-ray"/>
    <property type="resolution" value="2.14 A"/>
    <property type="chains" value="A/B/C/D=1-201"/>
</dbReference>
<dbReference type="PDBsum" id="3USS"/>
<dbReference type="PDBsum" id="4TLF"/>
<dbReference type="SMR" id="Q9I0N5"/>
<dbReference type="STRING" id="208964.PA2602"/>
<dbReference type="PaxDb" id="208964-PA2602"/>
<dbReference type="DNASU" id="882308"/>
<dbReference type="GeneID" id="882308"/>
<dbReference type="KEGG" id="pae:PA2602"/>
<dbReference type="PATRIC" id="fig|208964.12.peg.2723"/>
<dbReference type="PseudoCAP" id="PA2602"/>
<dbReference type="HOGENOM" id="CLU_118472_1_0_6"/>
<dbReference type="InParanoid" id="Q9I0N5"/>
<dbReference type="OrthoDB" id="7059163at2"/>
<dbReference type="PhylomeDB" id="Q9I0N5"/>
<dbReference type="BioCyc" id="PAER208964:G1FZ6-2641-MONOMER"/>
<dbReference type="BRENDA" id="1.13.11.20">
    <property type="organism ID" value="5087"/>
</dbReference>
<dbReference type="BRENDA" id="1.13.11.91">
    <property type="organism ID" value="231"/>
</dbReference>
<dbReference type="SABIO-RK" id="Q9I0N5"/>
<dbReference type="EvolutionaryTrace" id="Q9I0N5"/>
<dbReference type="Proteomes" id="UP000002438">
    <property type="component" value="Chromosome"/>
</dbReference>
<dbReference type="GO" id="GO:0008198">
    <property type="term" value="F:ferrous iron binding"/>
    <property type="evidence" value="ECO:0000318"/>
    <property type="project" value="GO_Central"/>
</dbReference>
<dbReference type="GO" id="GO:0005506">
    <property type="term" value="F:iron ion binding"/>
    <property type="evidence" value="ECO:0000314"/>
    <property type="project" value="UniProtKB"/>
</dbReference>
<dbReference type="GO" id="GO:0016702">
    <property type="term" value="F:oxidoreductase activity, acting on single donors with incorporation of molecular oxygen, incorporation of two atoms of oxygen"/>
    <property type="evidence" value="ECO:0000314"/>
    <property type="project" value="UniProtKB"/>
</dbReference>
<dbReference type="CDD" id="cd10548">
    <property type="entry name" value="cupin_CDO"/>
    <property type="match status" value="1"/>
</dbReference>
<dbReference type="Gene3D" id="1.20.5.440">
    <property type="entry name" value="ATP synthase delta/epsilon subunit, C-terminal domain"/>
    <property type="match status" value="1"/>
</dbReference>
<dbReference type="Gene3D" id="2.60.120.10">
    <property type="entry name" value="Jelly Rolls"/>
    <property type="match status" value="1"/>
</dbReference>
<dbReference type="InterPro" id="IPR010300">
    <property type="entry name" value="CDO_1"/>
</dbReference>
<dbReference type="InterPro" id="IPR014710">
    <property type="entry name" value="RmlC-like_jellyroll"/>
</dbReference>
<dbReference type="InterPro" id="IPR011051">
    <property type="entry name" value="RmlC_Cupin_sf"/>
</dbReference>
<dbReference type="PANTHER" id="PTHR12918">
    <property type="entry name" value="CYSTEINE DIOXYGENASE"/>
    <property type="match status" value="1"/>
</dbReference>
<dbReference type="PANTHER" id="PTHR12918:SF1">
    <property type="entry name" value="CYSTEINE DIOXYGENASE TYPE 1"/>
    <property type="match status" value="1"/>
</dbReference>
<dbReference type="Pfam" id="PF05995">
    <property type="entry name" value="CDO_I"/>
    <property type="match status" value="1"/>
</dbReference>
<dbReference type="SUPFAM" id="SSF51182">
    <property type="entry name" value="RmlC-like cupins"/>
    <property type="match status" value="1"/>
</dbReference>
<protein>
    <recommendedName>
        <fullName evidence="2">3-mercaptopropionate dioxygenase</fullName>
        <shortName evidence="2">3MDO</shortName>
        <shortName evidence="2">p3MDO</shortName>
        <ecNumber evidence="1">1.13.11.91</ecNumber>
    </recommendedName>
</protein>